<dbReference type="EMBL" id="FO081560">
    <property type="protein sequence ID" value="CCD72424.2"/>
    <property type="molecule type" value="Genomic_DNA"/>
</dbReference>
<dbReference type="EMBL" id="FO081559">
    <property type="protein sequence ID" value="CCD72424.2"/>
    <property type="status" value="JOINED"/>
    <property type="molecule type" value="Genomic_DNA"/>
</dbReference>
<dbReference type="PIR" id="T28859">
    <property type="entry name" value="T28859"/>
</dbReference>
<dbReference type="RefSeq" id="NP_509138.2">
    <property type="nucleotide sequence ID" value="NM_076737.5"/>
</dbReference>
<dbReference type="SMR" id="P52192"/>
<dbReference type="FunCoup" id="P52192">
    <property type="interactions" value="4"/>
</dbReference>
<dbReference type="STRING" id="6239.R03E9.4.1"/>
<dbReference type="PaxDb" id="6239-R03E9.4"/>
<dbReference type="EnsemblMetazoa" id="R03E9.4.1">
    <property type="protein sequence ID" value="R03E9.4.1"/>
    <property type="gene ID" value="WBGene00002149"/>
</dbReference>
<dbReference type="EnsemblMetazoa" id="R03E9.4.2">
    <property type="protein sequence ID" value="R03E9.4.2"/>
    <property type="gene ID" value="WBGene00002149"/>
</dbReference>
<dbReference type="GeneID" id="180944"/>
<dbReference type="KEGG" id="cel:CELE_R03E9.4"/>
<dbReference type="UCSC" id="R03E9.4">
    <property type="organism name" value="c. elegans"/>
</dbReference>
<dbReference type="AGR" id="WB:WBGene00002149"/>
<dbReference type="CTD" id="180944"/>
<dbReference type="WormBase" id="R03E9.4">
    <property type="protein sequence ID" value="CE47227"/>
    <property type="gene ID" value="WBGene00002149"/>
    <property type="gene designation" value="irk-1"/>
</dbReference>
<dbReference type="eggNOG" id="KOG3827">
    <property type="taxonomic scope" value="Eukaryota"/>
</dbReference>
<dbReference type="GeneTree" id="ENSGT00990000203615"/>
<dbReference type="HOGENOM" id="CLU_022738_10_0_1"/>
<dbReference type="InParanoid" id="P52192"/>
<dbReference type="OMA" id="YENEMAM"/>
<dbReference type="OrthoDB" id="273257at2759"/>
<dbReference type="PhylomeDB" id="P52192"/>
<dbReference type="Reactome" id="R-CEL-1296041">
    <property type="pathway name" value="Activation of G protein gated Potassium channels"/>
</dbReference>
<dbReference type="Reactome" id="R-CEL-1296053">
    <property type="pathway name" value="Classical Kir channels"/>
</dbReference>
<dbReference type="Reactome" id="R-CEL-1296067">
    <property type="pathway name" value="Potassium transport channels"/>
</dbReference>
<dbReference type="Reactome" id="R-CEL-5576886">
    <property type="pathway name" value="Phase 4 - resting membrane potential"/>
</dbReference>
<dbReference type="Reactome" id="R-CEL-997272">
    <property type="pathway name" value="Inhibition of voltage gated Ca2+ channels via Gbeta/gamma subunits"/>
</dbReference>
<dbReference type="PRO" id="PR:P52192"/>
<dbReference type="Proteomes" id="UP000001940">
    <property type="component" value="Chromosome X"/>
</dbReference>
<dbReference type="Bgee" id="WBGene00002149">
    <property type="expression patterns" value="Expressed in larva and 3 other cell types or tissues"/>
</dbReference>
<dbReference type="GO" id="GO:0034702">
    <property type="term" value="C:monoatomic ion channel complex"/>
    <property type="evidence" value="ECO:0007669"/>
    <property type="project" value="UniProtKB-KW"/>
</dbReference>
<dbReference type="GO" id="GO:0043005">
    <property type="term" value="C:neuron projection"/>
    <property type="evidence" value="ECO:0000314"/>
    <property type="project" value="UniProtKB"/>
</dbReference>
<dbReference type="GO" id="GO:0043025">
    <property type="term" value="C:neuronal cell body"/>
    <property type="evidence" value="ECO:0000315"/>
    <property type="project" value="UniProtKB"/>
</dbReference>
<dbReference type="GO" id="GO:0043204">
    <property type="term" value="C:perikaryon"/>
    <property type="evidence" value="ECO:0007669"/>
    <property type="project" value="UniProtKB-SubCell"/>
</dbReference>
<dbReference type="GO" id="GO:0005886">
    <property type="term" value="C:plasma membrane"/>
    <property type="evidence" value="ECO:0000318"/>
    <property type="project" value="GO_Central"/>
</dbReference>
<dbReference type="GO" id="GO:0005242">
    <property type="term" value="F:inward rectifier potassium channel activity"/>
    <property type="evidence" value="ECO:0000314"/>
    <property type="project" value="UniProtKB"/>
</dbReference>
<dbReference type="GO" id="GO:1990573">
    <property type="term" value="P:potassium ion import across plasma membrane"/>
    <property type="evidence" value="ECO:0000318"/>
    <property type="project" value="GO_Central"/>
</dbReference>
<dbReference type="GO" id="GO:0046662">
    <property type="term" value="P:regulation of egg-laying behavior"/>
    <property type="evidence" value="ECO:0000315"/>
    <property type="project" value="UniProtKB"/>
</dbReference>
<dbReference type="GO" id="GO:0008277">
    <property type="term" value="P:regulation of G protein-coupled receptor signaling pathway"/>
    <property type="evidence" value="ECO:0000315"/>
    <property type="project" value="UniProtKB"/>
</dbReference>
<dbReference type="GO" id="GO:0034765">
    <property type="term" value="P:regulation of monoatomic ion transmembrane transport"/>
    <property type="evidence" value="ECO:0000318"/>
    <property type="project" value="GO_Central"/>
</dbReference>
<dbReference type="FunFam" id="1.10.287.70:FF:000019">
    <property type="entry name" value="G protein-activated inward rectifier potassium channel 1"/>
    <property type="match status" value="1"/>
</dbReference>
<dbReference type="FunFam" id="2.60.40.1400:FF:000005">
    <property type="entry name" value="G protein-activated inward rectifier potassium channel 2"/>
    <property type="match status" value="1"/>
</dbReference>
<dbReference type="Gene3D" id="1.10.287.70">
    <property type="match status" value="1"/>
</dbReference>
<dbReference type="Gene3D" id="2.60.40.1400">
    <property type="entry name" value="G protein-activated inward rectifier potassium channel 1"/>
    <property type="match status" value="1"/>
</dbReference>
<dbReference type="InterPro" id="IPR014756">
    <property type="entry name" value="Ig_E-set"/>
</dbReference>
<dbReference type="InterPro" id="IPR041647">
    <property type="entry name" value="IRK_C"/>
</dbReference>
<dbReference type="InterPro" id="IPR016449">
    <property type="entry name" value="K_chnl_inward-rec_Kir"/>
</dbReference>
<dbReference type="InterPro" id="IPR013518">
    <property type="entry name" value="K_chnl_inward-rec_Kir_cyto"/>
</dbReference>
<dbReference type="InterPro" id="IPR040445">
    <property type="entry name" value="Kir_TM"/>
</dbReference>
<dbReference type="PANTHER" id="PTHR11767">
    <property type="entry name" value="INWARD RECTIFIER POTASSIUM CHANNEL"/>
    <property type="match status" value="1"/>
</dbReference>
<dbReference type="PANTHER" id="PTHR11767:SF51">
    <property type="entry name" value="INWARD RECTIFIER POTASSIUM CHANNEL IRK-1"/>
    <property type="match status" value="1"/>
</dbReference>
<dbReference type="Pfam" id="PF01007">
    <property type="entry name" value="IRK"/>
    <property type="match status" value="1"/>
</dbReference>
<dbReference type="Pfam" id="PF17655">
    <property type="entry name" value="IRK_C"/>
    <property type="match status" value="1"/>
</dbReference>
<dbReference type="PRINTS" id="PR01320">
    <property type="entry name" value="KIRCHANNEL"/>
</dbReference>
<dbReference type="SUPFAM" id="SSF81296">
    <property type="entry name" value="E set domains"/>
    <property type="match status" value="1"/>
</dbReference>
<dbReference type="SUPFAM" id="SSF81324">
    <property type="entry name" value="Voltage-gated potassium channels"/>
    <property type="match status" value="1"/>
</dbReference>
<comment type="function">
    <text evidence="3">Inward rectifier potassium channels are characterized by a greater tendency to allow potassium to flow into the cell rather than out of it. Required for modulation of the activity of the hermaphrodite-specific neurons (HSNs) by the G-protein coupled neuropeptide receptor egl-6 which in turn controls egg-laying behavior.</text>
</comment>
<comment type="subcellular location">
    <subcellularLocation>
        <location evidence="1">Membrane</location>
        <topology evidence="1">Multi-pass membrane protein</topology>
    </subcellularLocation>
    <subcellularLocation>
        <location evidence="3">Perikaryon</location>
    </subcellularLocation>
    <subcellularLocation>
        <location evidence="3">Cell projection</location>
    </subcellularLocation>
    <text>Detected in perikarya and neurites of HSNs.</text>
</comment>
<comment type="tissue specificity">
    <text evidence="3">Expressed in neurons in the head and tail with no expression detected in non-neuronal cells in these regions. Also detected in the egg-laying system of adult hermaphordites with strong expression in the HSN motor neurons and weak expression in vulval muscles.</text>
</comment>
<comment type="disruption phenotype">
    <text evidence="3">Strongly suppresses the egg-laying defect caused by a mutant form of egl-6. Very mild defect in egg-laying behavior when deleted in a wild-type background.</text>
</comment>
<comment type="similarity">
    <text evidence="4">Belongs to the inward rectifier-type potassium channel (TC 1.A.2.1) family.</text>
</comment>
<accession>P52192</accession>
<evidence type="ECO:0000250" key="1"/>
<evidence type="ECO:0000256" key="2">
    <source>
        <dbReference type="SAM" id="MobiDB-lite"/>
    </source>
</evidence>
<evidence type="ECO:0000269" key="3">
    <source>
    </source>
</evidence>
<evidence type="ECO:0000305" key="4"/>
<proteinExistence type="evidence at transcript level"/>
<name>IRK1_CAEEL</name>
<keyword id="KW-0966">Cell projection</keyword>
<keyword id="KW-0407">Ion channel</keyword>
<keyword id="KW-0406">Ion transport</keyword>
<keyword id="KW-0472">Membrane</keyword>
<keyword id="KW-0630">Potassium</keyword>
<keyword id="KW-0633">Potassium transport</keyword>
<keyword id="KW-1185">Reference proteome</keyword>
<keyword id="KW-0812">Transmembrane</keyword>
<keyword id="KW-1133">Transmembrane helix</keyword>
<keyword id="KW-0813">Transport</keyword>
<keyword id="KW-0851">Voltage-gated channel</keyword>
<reference key="1">
    <citation type="journal article" date="1998" name="Science">
        <title>Genome sequence of the nematode C. elegans: a platform for investigating biology.</title>
        <authorList>
            <consortium name="The C. elegans sequencing consortium"/>
        </authorList>
    </citation>
    <scope>NUCLEOTIDE SEQUENCE [LARGE SCALE GENOMIC DNA]</scope>
    <source>
        <strain>Bristol N2</strain>
    </source>
</reference>
<reference key="2">
    <citation type="journal article" date="2012" name="J. Neurosci.">
        <title>IRK-1 potassium channels mediate peptidergic inhibition of Caenorhabditis elegans serotonin neurons via a G(o) signaling pathway.</title>
        <authorList>
            <person name="Emtage L."/>
            <person name="Aziz-Zaman S."/>
            <person name="Padovan-Merhar O."/>
            <person name="Horvitz H.R."/>
            <person name="Fang-Yen C."/>
            <person name="Ringstad N."/>
        </authorList>
    </citation>
    <scope>FUNCTION</scope>
    <scope>SUBCELLULAR LOCATION</scope>
    <scope>TISSUE SPECIFICITY</scope>
    <scope>DISRUPTION PHENOTYPE</scope>
</reference>
<gene>
    <name type="primary">irk-1</name>
    <name type="synonym">irk-4</name>
    <name type="ORF">R03E9.4</name>
</gene>
<organism>
    <name type="scientific">Caenorhabditis elegans</name>
    <dbReference type="NCBI Taxonomy" id="6239"/>
    <lineage>
        <taxon>Eukaryota</taxon>
        <taxon>Metazoa</taxon>
        <taxon>Ecdysozoa</taxon>
        <taxon>Nematoda</taxon>
        <taxon>Chromadorea</taxon>
        <taxon>Rhabditida</taxon>
        <taxon>Rhabditina</taxon>
        <taxon>Rhabditomorpha</taxon>
        <taxon>Rhabditoidea</taxon>
        <taxon>Rhabditidae</taxon>
        <taxon>Peloderinae</taxon>
        <taxon>Caenorhabditis</taxon>
    </lineage>
</organism>
<sequence length="544" mass="61338">MTLSVPDCAEMNRIRMSNHRKMSLGSAPLIANGRPSPPPRRTSLAESIRTLAFTARRNSSPLYRKSTKKLKKSRLVGKNGICNVYNTNVPKKDRQYLRDIFTTMIDVKWRWMLMLFASAFVLSWSIFGTTYYLIALVHGDLSLPTPVNHTACVMNLDSVYSSFLFAVETHHTIGYGHRYITTECYLAGAIVCLQAICALLLQSFMVGIVFAKMARPKKRAETIIFSDKAVICLRDGQLCFLCRVGDMRNTHLVEAHVRLQFITDRETNEGEIEPLHQFEMKVGPSIADDDRLFLVWPTTLCHVIDSRSPLYNYNQQTLMSAQFEIIVLLEGIVESTGMTAQAKTSYLPSEVLWGHRFRKLVTYQRSNGSYQIDYDLFHSTYPVRTPAMSPAEFYSSKPNLKDYYCHDSHEHKLEDNRSSDSTPLPSPSPYSYPSTPLNHFQSSSNSPVFSNNHSKFNTEAVTCEAGMLCPPTIVVQCPSTCASPNHMRRTRNQMDKSRTSSSCDLTRPSTALSDLEEECSDSGSPTKCQSPPVVPIHIEIVSET</sequence>
<protein>
    <recommendedName>
        <fullName>Inward rectifier potassium channel irk-1</fullName>
    </recommendedName>
</protein>
<feature type="chain" id="PRO_0000154979" description="Inward rectifier potassium channel irk-1">
    <location>
        <begin position="1"/>
        <end position="544"/>
    </location>
</feature>
<feature type="topological domain" description="Cytoplasmic" evidence="1">
    <location>
        <begin position="1"/>
        <end position="109"/>
    </location>
</feature>
<feature type="transmembrane region" description="Helical; Name=M1" evidence="1">
    <location>
        <begin position="110"/>
        <end position="134"/>
    </location>
</feature>
<feature type="topological domain" description="Extracellular" evidence="1">
    <location>
        <begin position="135"/>
        <end position="158"/>
    </location>
</feature>
<feature type="intramembrane region" description="Helical; Pore-forming; Name=H5" evidence="1">
    <location>
        <begin position="159"/>
        <end position="170"/>
    </location>
</feature>
<feature type="intramembrane region" description="Pore-forming" evidence="1">
    <location>
        <begin position="171"/>
        <end position="177"/>
    </location>
</feature>
<feature type="topological domain" description="Extracellular" evidence="1">
    <location>
        <begin position="178"/>
        <end position="186"/>
    </location>
</feature>
<feature type="transmembrane region" description="Helical; Name=M2" evidence="1">
    <location>
        <begin position="187"/>
        <end position="208"/>
    </location>
</feature>
<feature type="topological domain" description="Cytoplasmic" evidence="1">
    <location>
        <begin position="209"/>
        <end position="544"/>
    </location>
</feature>
<feature type="region of interest" description="Disordered" evidence="2">
    <location>
        <begin position="411"/>
        <end position="448"/>
    </location>
</feature>
<feature type="region of interest" description="Disordered" evidence="2">
    <location>
        <begin position="512"/>
        <end position="533"/>
    </location>
</feature>
<feature type="short sequence motif" description="Selectivity filter" evidence="1">
    <location>
        <begin position="172"/>
        <end position="177"/>
    </location>
</feature>
<feature type="compositionally biased region" description="Polar residues" evidence="2">
    <location>
        <begin position="438"/>
        <end position="448"/>
    </location>
</feature>